<dbReference type="EMBL" id="CP000323">
    <property type="protein sequence ID" value="ABE74286.1"/>
    <property type="molecule type" value="Genomic_DNA"/>
</dbReference>
<dbReference type="RefSeq" id="WP_011512862.1">
    <property type="nucleotide sequence ID" value="NC_007969.1"/>
</dbReference>
<dbReference type="SMR" id="Q1QDG7"/>
<dbReference type="STRING" id="335284.Pcryo_0503"/>
<dbReference type="KEGG" id="pcr:Pcryo_0503"/>
<dbReference type="eggNOG" id="COG0200">
    <property type="taxonomic scope" value="Bacteria"/>
</dbReference>
<dbReference type="HOGENOM" id="CLU_055188_4_2_6"/>
<dbReference type="Proteomes" id="UP000002425">
    <property type="component" value="Chromosome"/>
</dbReference>
<dbReference type="GO" id="GO:0022625">
    <property type="term" value="C:cytosolic large ribosomal subunit"/>
    <property type="evidence" value="ECO:0007669"/>
    <property type="project" value="TreeGrafter"/>
</dbReference>
<dbReference type="GO" id="GO:0019843">
    <property type="term" value="F:rRNA binding"/>
    <property type="evidence" value="ECO:0007669"/>
    <property type="project" value="UniProtKB-UniRule"/>
</dbReference>
<dbReference type="GO" id="GO:0003735">
    <property type="term" value="F:structural constituent of ribosome"/>
    <property type="evidence" value="ECO:0007669"/>
    <property type="project" value="InterPro"/>
</dbReference>
<dbReference type="GO" id="GO:0006412">
    <property type="term" value="P:translation"/>
    <property type="evidence" value="ECO:0007669"/>
    <property type="project" value="UniProtKB-UniRule"/>
</dbReference>
<dbReference type="Gene3D" id="3.100.10.10">
    <property type="match status" value="1"/>
</dbReference>
<dbReference type="HAMAP" id="MF_01341">
    <property type="entry name" value="Ribosomal_uL15"/>
    <property type="match status" value="1"/>
</dbReference>
<dbReference type="InterPro" id="IPR030878">
    <property type="entry name" value="Ribosomal_uL15"/>
</dbReference>
<dbReference type="InterPro" id="IPR021131">
    <property type="entry name" value="Ribosomal_uL15/eL18"/>
</dbReference>
<dbReference type="InterPro" id="IPR036227">
    <property type="entry name" value="Ribosomal_uL15/eL18_sf"/>
</dbReference>
<dbReference type="InterPro" id="IPR005749">
    <property type="entry name" value="Ribosomal_uL15_bac-type"/>
</dbReference>
<dbReference type="NCBIfam" id="TIGR01071">
    <property type="entry name" value="rplO_bact"/>
    <property type="match status" value="1"/>
</dbReference>
<dbReference type="PANTHER" id="PTHR12934">
    <property type="entry name" value="50S RIBOSOMAL PROTEIN L15"/>
    <property type="match status" value="1"/>
</dbReference>
<dbReference type="PANTHER" id="PTHR12934:SF11">
    <property type="entry name" value="LARGE RIBOSOMAL SUBUNIT PROTEIN UL15M"/>
    <property type="match status" value="1"/>
</dbReference>
<dbReference type="Pfam" id="PF00828">
    <property type="entry name" value="Ribosomal_L27A"/>
    <property type="match status" value="1"/>
</dbReference>
<dbReference type="SUPFAM" id="SSF52080">
    <property type="entry name" value="Ribosomal proteins L15p and L18e"/>
    <property type="match status" value="1"/>
</dbReference>
<accession>Q1QDG7</accession>
<feature type="chain" id="PRO_0000251544" description="Large ribosomal subunit protein uL15">
    <location>
        <begin position="1"/>
        <end position="146"/>
    </location>
</feature>
<feature type="region of interest" description="Disordered" evidence="2">
    <location>
        <begin position="1"/>
        <end position="55"/>
    </location>
</feature>
<feature type="compositionally biased region" description="Gly residues" evidence="2">
    <location>
        <begin position="24"/>
        <end position="37"/>
    </location>
</feature>
<sequence length="146" mass="15533">MGLRLNELSPGVGAKKTAQRRGRGIGSGLGKTGGRGVKGQKSRSGSSIRSGFEGGQMPLYRRLPKFGFTSKMAMTTAEVRLSELSQIEGDVVSIETLKAANLIRRDMKRARVMLSGEVTKAYTFKGIKVTKGAKQAIEAAGGSIEE</sequence>
<organism>
    <name type="scientific">Psychrobacter cryohalolentis (strain ATCC BAA-1226 / DSM 17306 / VKM B-2378 / K5)</name>
    <dbReference type="NCBI Taxonomy" id="335284"/>
    <lineage>
        <taxon>Bacteria</taxon>
        <taxon>Pseudomonadati</taxon>
        <taxon>Pseudomonadota</taxon>
        <taxon>Gammaproteobacteria</taxon>
        <taxon>Moraxellales</taxon>
        <taxon>Moraxellaceae</taxon>
        <taxon>Psychrobacter</taxon>
    </lineage>
</organism>
<reference key="1">
    <citation type="submission" date="2006-03" db="EMBL/GenBank/DDBJ databases">
        <title>Complete sequence of chromosome of Psychrobacter cryohalolentis K5.</title>
        <authorList>
            <consortium name="US DOE Joint Genome Institute"/>
            <person name="Copeland A."/>
            <person name="Lucas S."/>
            <person name="Lapidus A."/>
            <person name="Barry K."/>
            <person name="Detter J.C."/>
            <person name="Glavina T."/>
            <person name="Hammon N."/>
            <person name="Israni S."/>
            <person name="Dalin E."/>
            <person name="Tice H."/>
            <person name="Pitluck S."/>
            <person name="Brettin T."/>
            <person name="Bruce D."/>
            <person name="Han C."/>
            <person name="Tapia R."/>
            <person name="Sims D.R."/>
            <person name="Gilna P."/>
            <person name="Schmutz J."/>
            <person name="Larimer F."/>
            <person name="Land M."/>
            <person name="Hauser L."/>
            <person name="Kyrpides N."/>
            <person name="Kim E."/>
            <person name="Richardson P."/>
        </authorList>
    </citation>
    <scope>NUCLEOTIDE SEQUENCE [LARGE SCALE GENOMIC DNA]</scope>
    <source>
        <strain>ATCC BAA-1226 / DSM 17306 / VKM B-2378 / K5</strain>
    </source>
</reference>
<protein>
    <recommendedName>
        <fullName evidence="1">Large ribosomal subunit protein uL15</fullName>
    </recommendedName>
    <alternativeName>
        <fullName evidence="3">50S ribosomal protein L15</fullName>
    </alternativeName>
</protein>
<comment type="function">
    <text evidence="1">Binds to the 23S rRNA.</text>
</comment>
<comment type="subunit">
    <text evidence="1">Part of the 50S ribosomal subunit.</text>
</comment>
<comment type="similarity">
    <text evidence="1">Belongs to the universal ribosomal protein uL15 family.</text>
</comment>
<keyword id="KW-0687">Ribonucleoprotein</keyword>
<keyword id="KW-0689">Ribosomal protein</keyword>
<keyword id="KW-0694">RNA-binding</keyword>
<keyword id="KW-0699">rRNA-binding</keyword>
<name>RL15_PSYCK</name>
<gene>
    <name evidence="1" type="primary">rplO</name>
    <name type="ordered locus">Pcryo_0503</name>
</gene>
<proteinExistence type="inferred from homology"/>
<evidence type="ECO:0000255" key="1">
    <source>
        <dbReference type="HAMAP-Rule" id="MF_01341"/>
    </source>
</evidence>
<evidence type="ECO:0000256" key="2">
    <source>
        <dbReference type="SAM" id="MobiDB-lite"/>
    </source>
</evidence>
<evidence type="ECO:0000305" key="3"/>